<comment type="function">
    <text evidence="1">With S4 and S12 plays an important role in translational accuracy.</text>
</comment>
<comment type="function">
    <text evidence="1">Located at the back of the 30S subunit body where it stabilizes the conformation of the head with respect to the body.</text>
</comment>
<comment type="subunit">
    <text evidence="1">Part of the 30S ribosomal subunit. Contacts proteins S4 and S8.</text>
</comment>
<comment type="domain">
    <text>The N-terminal domain interacts with the head of the 30S subunit; the C-terminal domain interacts with the body and contacts protein S4. The interaction surface between S4 and S5 is involved in control of translational fidelity.</text>
</comment>
<comment type="similarity">
    <text evidence="1">Belongs to the universal ribosomal protein uS5 family.</text>
</comment>
<reference key="1">
    <citation type="journal article" date="2004" name="Genome Res.">
        <title>The complete genome and proteome of Mycoplasma mobile.</title>
        <authorList>
            <person name="Jaffe J.D."/>
            <person name="Stange-Thomann N."/>
            <person name="Smith C."/>
            <person name="DeCaprio D."/>
            <person name="Fisher S."/>
            <person name="Butler J."/>
            <person name="Calvo S."/>
            <person name="Elkins T."/>
            <person name="FitzGerald M.G."/>
            <person name="Hafez N."/>
            <person name="Kodira C.D."/>
            <person name="Major J."/>
            <person name="Wang S."/>
            <person name="Wilkinson J."/>
            <person name="Nicol R."/>
            <person name="Nusbaum C."/>
            <person name="Birren B."/>
            <person name="Berg H.C."/>
            <person name="Church G.M."/>
        </authorList>
    </citation>
    <scope>NUCLEOTIDE SEQUENCE [LARGE SCALE GENOMIC DNA]</scope>
    <source>
        <strain>ATCC 43663 / NCTC 11711 / 163 K</strain>
    </source>
</reference>
<name>RS5_MYCM1</name>
<keyword id="KW-1185">Reference proteome</keyword>
<keyword id="KW-0687">Ribonucleoprotein</keyword>
<keyword id="KW-0689">Ribosomal protein</keyword>
<keyword id="KW-0694">RNA-binding</keyword>
<keyword id="KW-0699">rRNA-binding</keyword>
<feature type="chain" id="PRO_0000131550" description="Small ribosomal subunit protein uS5">
    <location>
        <begin position="1"/>
        <end position="243"/>
    </location>
</feature>
<feature type="domain" description="S5 DRBM" evidence="1">
    <location>
        <begin position="89"/>
        <end position="152"/>
    </location>
</feature>
<feature type="region of interest" description="Disordered" evidence="2">
    <location>
        <begin position="1"/>
        <end position="85"/>
    </location>
</feature>
<feature type="compositionally biased region" description="Basic and acidic residues" evidence="2">
    <location>
        <begin position="1"/>
        <end position="21"/>
    </location>
</feature>
<feature type="compositionally biased region" description="Basic and acidic residues" evidence="2">
    <location>
        <begin position="34"/>
        <end position="46"/>
    </location>
</feature>
<proteinExistence type="inferred from homology"/>
<accession>Q6KI38</accession>
<gene>
    <name evidence="1" type="primary">rpsE</name>
    <name type="ordered locus">MMOB2520</name>
</gene>
<sequence>MPIDKKQEKNFTNKIQEEGQKSLDTSLTQEIEILEEKLNKNPDHKGTINTTPNDNSTSKNSKDKDFKFKKKTNSQNFKKNANKKPEKEFEEKIVNIARVTNVVKGGRRFSFAAVVVVGDKKGRVGYGHGKALEVPDAIKKAVKDAQNNLIRVPIINKSTVPHEQWAKFLASKVMLKPAPKGKGIIASNSVRAVVELAGYTDIYTKSYGSRSKENVVKAVFDALKKLRYAEDIAKMRDLDIKDL</sequence>
<protein>
    <recommendedName>
        <fullName evidence="1">Small ribosomal subunit protein uS5</fullName>
    </recommendedName>
    <alternativeName>
        <fullName evidence="3">30S ribosomal protein S5</fullName>
    </alternativeName>
</protein>
<evidence type="ECO:0000255" key="1">
    <source>
        <dbReference type="HAMAP-Rule" id="MF_01307"/>
    </source>
</evidence>
<evidence type="ECO:0000256" key="2">
    <source>
        <dbReference type="SAM" id="MobiDB-lite"/>
    </source>
</evidence>
<evidence type="ECO:0000305" key="3"/>
<dbReference type="EMBL" id="AE017308">
    <property type="protein sequence ID" value="AAT27738.1"/>
    <property type="molecule type" value="Genomic_DNA"/>
</dbReference>
<dbReference type="RefSeq" id="WP_011264772.1">
    <property type="nucleotide sequence ID" value="NC_006908.1"/>
</dbReference>
<dbReference type="SMR" id="Q6KI38"/>
<dbReference type="STRING" id="267748.MMOB2520"/>
<dbReference type="KEGG" id="mmo:MMOB2520"/>
<dbReference type="eggNOG" id="COG0098">
    <property type="taxonomic scope" value="Bacteria"/>
</dbReference>
<dbReference type="HOGENOM" id="CLU_065898_2_1_14"/>
<dbReference type="Proteomes" id="UP000009072">
    <property type="component" value="Chromosome"/>
</dbReference>
<dbReference type="GO" id="GO:0015935">
    <property type="term" value="C:small ribosomal subunit"/>
    <property type="evidence" value="ECO:0007669"/>
    <property type="project" value="InterPro"/>
</dbReference>
<dbReference type="GO" id="GO:0019843">
    <property type="term" value="F:rRNA binding"/>
    <property type="evidence" value="ECO:0007669"/>
    <property type="project" value="UniProtKB-UniRule"/>
</dbReference>
<dbReference type="GO" id="GO:0003735">
    <property type="term" value="F:structural constituent of ribosome"/>
    <property type="evidence" value="ECO:0007669"/>
    <property type="project" value="InterPro"/>
</dbReference>
<dbReference type="GO" id="GO:0006412">
    <property type="term" value="P:translation"/>
    <property type="evidence" value="ECO:0007669"/>
    <property type="project" value="UniProtKB-UniRule"/>
</dbReference>
<dbReference type="FunFam" id="3.30.160.20:FF:000001">
    <property type="entry name" value="30S ribosomal protein S5"/>
    <property type="match status" value="1"/>
</dbReference>
<dbReference type="FunFam" id="3.30.230.10:FF:000002">
    <property type="entry name" value="30S ribosomal protein S5"/>
    <property type="match status" value="1"/>
</dbReference>
<dbReference type="Gene3D" id="3.30.160.20">
    <property type="match status" value="1"/>
</dbReference>
<dbReference type="Gene3D" id="3.30.230.10">
    <property type="match status" value="1"/>
</dbReference>
<dbReference type="HAMAP" id="MF_01307_B">
    <property type="entry name" value="Ribosomal_uS5_B"/>
    <property type="match status" value="1"/>
</dbReference>
<dbReference type="InterPro" id="IPR020568">
    <property type="entry name" value="Ribosomal_Su5_D2-typ_SF"/>
</dbReference>
<dbReference type="InterPro" id="IPR000851">
    <property type="entry name" value="Ribosomal_uS5"/>
</dbReference>
<dbReference type="InterPro" id="IPR005712">
    <property type="entry name" value="Ribosomal_uS5_bac-type"/>
</dbReference>
<dbReference type="InterPro" id="IPR005324">
    <property type="entry name" value="Ribosomal_uS5_C"/>
</dbReference>
<dbReference type="InterPro" id="IPR013810">
    <property type="entry name" value="Ribosomal_uS5_N"/>
</dbReference>
<dbReference type="InterPro" id="IPR018192">
    <property type="entry name" value="Ribosomal_uS5_N_CS"/>
</dbReference>
<dbReference type="InterPro" id="IPR014721">
    <property type="entry name" value="Ribsml_uS5_D2-typ_fold_subgr"/>
</dbReference>
<dbReference type="NCBIfam" id="TIGR01021">
    <property type="entry name" value="rpsE_bact"/>
    <property type="match status" value="1"/>
</dbReference>
<dbReference type="PANTHER" id="PTHR48277">
    <property type="entry name" value="MITOCHONDRIAL RIBOSOMAL PROTEIN S5"/>
    <property type="match status" value="1"/>
</dbReference>
<dbReference type="PANTHER" id="PTHR48277:SF1">
    <property type="entry name" value="MITOCHONDRIAL RIBOSOMAL PROTEIN S5"/>
    <property type="match status" value="1"/>
</dbReference>
<dbReference type="Pfam" id="PF00333">
    <property type="entry name" value="Ribosomal_S5"/>
    <property type="match status" value="1"/>
</dbReference>
<dbReference type="Pfam" id="PF03719">
    <property type="entry name" value="Ribosomal_S5_C"/>
    <property type="match status" value="1"/>
</dbReference>
<dbReference type="SUPFAM" id="SSF54768">
    <property type="entry name" value="dsRNA-binding domain-like"/>
    <property type="match status" value="1"/>
</dbReference>
<dbReference type="SUPFAM" id="SSF54211">
    <property type="entry name" value="Ribosomal protein S5 domain 2-like"/>
    <property type="match status" value="1"/>
</dbReference>
<dbReference type="PROSITE" id="PS00585">
    <property type="entry name" value="RIBOSOMAL_S5"/>
    <property type="match status" value="1"/>
</dbReference>
<dbReference type="PROSITE" id="PS50881">
    <property type="entry name" value="S5_DSRBD"/>
    <property type="match status" value="1"/>
</dbReference>
<organism>
    <name type="scientific">Mycoplasma mobile (strain ATCC 43663 / 163K / NCTC 11711)</name>
    <name type="common">Mesomycoplasma mobile</name>
    <dbReference type="NCBI Taxonomy" id="267748"/>
    <lineage>
        <taxon>Bacteria</taxon>
        <taxon>Bacillati</taxon>
        <taxon>Mycoplasmatota</taxon>
        <taxon>Mycoplasmoidales</taxon>
        <taxon>Metamycoplasmataceae</taxon>
        <taxon>Mesomycoplasma</taxon>
    </lineage>
</organism>